<keyword id="KW-0202">Cytokine</keyword>
<keyword id="KW-1015">Disulfide bond</keyword>
<keyword id="KW-0325">Glycoprotein</keyword>
<keyword id="KW-1185">Reference proteome</keyword>
<keyword id="KW-0964">Secreted</keyword>
<keyword id="KW-0732">Signal</keyword>
<feature type="signal peptide" evidence="1">
    <location>
        <begin position="1"/>
        <end position="19"/>
    </location>
</feature>
<feature type="chain" id="PRO_0000006713" description="Cerberus">
    <location>
        <begin position="20"/>
        <end position="272"/>
    </location>
</feature>
<feature type="domain" description="CTCK" evidence="2">
    <location>
        <begin position="168"/>
        <end position="253"/>
    </location>
</feature>
<feature type="glycosylation site" description="N-linked (GlcNAc...) asparagine" evidence="1">
    <location>
        <position position="228"/>
    </location>
</feature>
<feature type="disulfide bond" evidence="2">
    <location>
        <begin position="168"/>
        <end position="215"/>
    </location>
</feature>
<feature type="disulfide bond" evidence="2">
    <location>
        <begin position="182"/>
        <end position="229"/>
    </location>
</feature>
<feature type="disulfide bond" evidence="2">
    <location>
        <begin position="192"/>
        <end position="245"/>
    </location>
</feature>
<feature type="disulfide bond" evidence="2">
    <location>
        <begin position="196"/>
        <end position="247"/>
    </location>
</feature>
<accession>Q9PWB0</accession>
<reference key="1">
    <citation type="journal article" date="1999" name="Curr. Biol.">
        <title>Cerberus regulates left-right asymmetry of the embryonic head and heart.</title>
        <authorList>
            <person name="Zhu L."/>
            <person name="Marvin M.J."/>
            <person name="Gardiner A."/>
            <person name="Lassar A.B."/>
            <person name="Mercola M."/>
            <person name="Stern C.D."/>
            <person name="Levin M."/>
        </authorList>
    </citation>
    <scope>NUCLEOTIDE SEQUENCE [MRNA]</scope>
    <scope>FUNCTION</scope>
    <scope>DEVELOPMENTAL STAGE</scope>
    <scope>INDUCTION</scope>
</reference>
<dbReference type="EMBL" id="AF139721">
    <property type="protein sequence ID" value="AAD51610.1"/>
    <property type="molecule type" value="mRNA"/>
</dbReference>
<dbReference type="SMR" id="Q9PWB0"/>
<dbReference type="FunCoup" id="Q9PWB0">
    <property type="interactions" value="10"/>
</dbReference>
<dbReference type="STRING" id="9031.ENSGALP00000008711"/>
<dbReference type="GlyCosmos" id="Q9PWB0">
    <property type="glycosylation" value="1 site, No reported glycans"/>
</dbReference>
<dbReference type="GlyGen" id="Q9PWB0">
    <property type="glycosylation" value="1 site"/>
</dbReference>
<dbReference type="PaxDb" id="9031-ENSGALP00000008711"/>
<dbReference type="Ensembl" id="ENSGALT00000135683">
    <property type="protein sequence ID" value="ENSGALP00000078783"/>
    <property type="gene ID" value="ENSGALG00000060895"/>
</dbReference>
<dbReference type="Ensembl" id="ENSGALT00010039626.1">
    <property type="protein sequence ID" value="ENSGALP00010022885.1"/>
    <property type="gene ID" value="ENSGALG00010016448.1"/>
</dbReference>
<dbReference type="VEuPathDB" id="HostDB:geneid_395623"/>
<dbReference type="eggNOG" id="ENOG502S2G4">
    <property type="taxonomic scope" value="Eukaryota"/>
</dbReference>
<dbReference type="GeneTree" id="ENSGT00530000063926"/>
<dbReference type="HOGENOM" id="CLU_104447_0_0_1"/>
<dbReference type="InParanoid" id="Q9PWB0"/>
<dbReference type="OrthoDB" id="9950584at2759"/>
<dbReference type="PhylomeDB" id="Q9PWB0"/>
<dbReference type="TreeFam" id="TF106445"/>
<dbReference type="Reactome" id="R-GGA-201451">
    <property type="pathway name" value="Signaling by BMP"/>
</dbReference>
<dbReference type="PRO" id="PR:Q9PWB0"/>
<dbReference type="Proteomes" id="UP000000539">
    <property type="component" value="Chromosome Z"/>
</dbReference>
<dbReference type="GO" id="GO:0005615">
    <property type="term" value="C:extracellular space"/>
    <property type="evidence" value="ECO:0000314"/>
    <property type="project" value="AgBase"/>
</dbReference>
<dbReference type="GO" id="GO:0036122">
    <property type="term" value="F:BMP binding"/>
    <property type="evidence" value="ECO:0007669"/>
    <property type="project" value="Ensembl"/>
</dbReference>
<dbReference type="GO" id="GO:0005125">
    <property type="term" value="F:cytokine activity"/>
    <property type="evidence" value="ECO:0007669"/>
    <property type="project" value="UniProtKB-KW"/>
</dbReference>
<dbReference type="GO" id="GO:0016015">
    <property type="term" value="F:morphogen activity"/>
    <property type="evidence" value="ECO:0000318"/>
    <property type="project" value="GO_Central"/>
</dbReference>
<dbReference type="GO" id="GO:0042803">
    <property type="term" value="F:protein homodimerization activity"/>
    <property type="evidence" value="ECO:0007669"/>
    <property type="project" value="Ensembl"/>
</dbReference>
<dbReference type="GO" id="GO:0009948">
    <property type="term" value="P:anterior/posterior axis specification"/>
    <property type="evidence" value="ECO:0007669"/>
    <property type="project" value="Ensembl"/>
</dbReference>
<dbReference type="GO" id="GO:0030282">
    <property type="term" value="P:bone mineralization"/>
    <property type="evidence" value="ECO:0007669"/>
    <property type="project" value="Ensembl"/>
</dbReference>
<dbReference type="GO" id="GO:0042074">
    <property type="term" value="P:cell migration involved in gastrulation"/>
    <property type="evidence" value="ECO:0007669"/>
    <property type="project" value="Ensembl"/>
</dbReference>
<dbReference type="GO" id="GO:0071276">
    <property type="term" value="P:cellular response to cadmium ion"/>
    <property type="evidence" value="ECO:0007669"/>
    <property type="project" value="Ensembl"/>
</dbReference>
<dbReference type="GO" id="GO:0048263">
    <property type="term" value="P:determination of dorsal identity"/>
    <property type="evidence" value="ECO:0007669"/>
    <property type="project" value="Ensembl"/>
</dbReference>
<dbReference type="GO" id="GO:0061371">
    <property type="term" value="P:determination of heart left/right asymmetry"/>
    <property type="evidence" value="ECO:0000318"/>
    <property type="project" value="GO_Central"/>
</dbReference>
<dbReference type="GO" id="GO:0003140">
    <property type="term" value="P:determination of left/right asymmetry in lateral mesoderm"/>
    <property type="evidence" value="ECO:0000314"/>
    <property type="project" value="BHF-UCL"/>
</dbReference>
<dbReference type="GO" id="GO:0003419">
    <property type="term" value="P:growth plate cartilage chondrocyte proliferation"/>
    <property type="evidence" value="ECO:0007669"/>
    <property type="project" value="Ensembl"/>
</dbReference>
<dbReference type="GO" id="GO:0001947">
    <property type="term" value="P:heart looping"/>
    <property type="evidence" value="ECO:0000315"/>
    <property type="project" value="BHF-UCL"/>
</dbReference>
<dbReference type="GO" id="GO:0048382">
    <property type="term" value="P:mesendoderm development"/>
    <property type="evidence" value="ECO:0000314"/>
    <property type="project" value="BHF-UCL"/>
</dbReference>
<dbReference type="GO" id="GO:0030514">
    <property type="term" value="P:negative regulation of BMP signaling pathway"/>
    <property type="evidence" value="ECO:0000315"/>
    <property type="project" value="AgBase"/>
</dbReference>
<dbReference type="GO" id="GO:0008285">
    <property type="term" value="P:negative regulation of cell population proliferation"/>
    <property type="evidence" value="ECO:0007669"/>
    <property type="project" value="Ensembl"/>
</dbReference>
<dbReference type="GO" id="GO:0010629">
    <property type="term" value="P:negative regulation of gene expression"/>
    <property type="evidence" value="ECO:0000315"/>
    <property type="project" value="AgBase"/>
</dbReference>
<dbReference type="GO" id="GO:2000381">
    <property type="term" value="P:negative regulation of mesoderm development"/>
    <property type="evidence" value="ECO:0007669"/>
    <property type="project" value="Ensembl"/>
</dbReference>
<dbReference type="GO" id="GO:1900108">
    <property type="term" value="P:negative regulation of nodal signaling pathway"/>
    <property type="evidence" value="ECO:0000314"/>
    <property type="project" value="BHF-UCL"/>
</dbReference>
<dbReference type="GO" id="GO:0007399">
    <property type="term" value="P:nervous system development"/>
    <property type="evidence" value="ECO:0007669"/>
    <property type="project" value="Ensembl"/>
</dbReference>
<dbReference type="GO" id="GO:0010628">
    <property type="term" value="P:positive regulation of gene expression"/>
    <property type="evidence" value="ECO:0000315"/>
    <property type="project" value="AgBase"/>
</dbReference>
<dbReference type="GO" id="GO:1901207">
    <property type="term" value="P:regulation of heart looping"/>
    <property type="evidence" value="ECO:0000315"/>
    <property type="project" value="AgBase"/>
</dbReference>
<dbReference type="GO" id="GO:0035582">
    <property type="term" value="P:sequestering of BMP in extracellular matrix"/>
    <property type="evidence" value="ECO:0000318"/>
    <property type="project" value="GO_Central"/>
</dbReference>
<dbReference type="GO" id="GO:0023019">
    <property type="term" value="P:signal transduction involved in regulation of gene expression"/>
    <property type="evidence" value="ECO:0000318"/>
    <property type="project" value="GO_Central"/>
</dbReference>
<dbReference type="GO" id="GO:0001657">
    <property type="term" value="P:ureteric bud development"/>
    <property type="evidence" value="ECO:0007669"/>
    <property type="project" value="Ensembl"/>
</dbReference>
<dbReference type="FunFam" id="2.10.90.10:FF:000042">
    <property type="entry name" value="Cerberus 1 homolog (Xenopus laevis)"/>
    <property type="match status" value="1"/>
</dbReference>
<dbReference type="Gene3D" id="2.10.90.10">
    <property type="entry name" value="Cystine-knot cytokines"/>
    <property type="match status" value="1"/>
</dbReference>
<dbReference type="InterPro" id="IPR016860">
    <property type="entry name" value="Cerberus"/>
</dbReference>
<dbReference type="InterPro" id="IPR006207">
    <property type="entry name" value="Cys_knot_C"/>
</dbReference>
<dbReference type="InterPro" id="IPR029034">
    <property type="entry name" value="Cystine-knot_cytokine"/>
</dbReference>
<dbReference type="InterPro" id="IPR004133">
    <property type="entry name" value="DAN"/>
</dbReference>
<dbReference type="PANTHER" id="PTHR15273:SF8">
    <property type="entry name" value="CERBERUS"/>
    <property type="match status" value="1"/>
</dbReference>
<dbReference type="PANTHER" id="PTHR15273">
    <property type="entry name" value="DAN DOMAIN FAMILY MEMBER 5"/>
    <property type="match status" value="1"/>
</dbReference>
<dbReference type="Pfam" id="PF03045">
    <property type="entry name" value="DAN"/>
    <property type="match status" value="1"/>
</dbReference>
<dbReference type="PIRSF" id="PIRSF027807">
    <property type="entry name" value="Cerberus"/>
    <property type="match status" value="1"/>
</dbReference>
<dbReference type="SMART" id="SM00041">
    <property type="entry name" value="CT"/>
    <property type="match status" value="1"/>
</dbReference>
<dbReference type="PROSITE" id="PS01225">
    <property type="entry name" value="CTCK_2"/>
    <property type="match status" value="1"/>
</dbReference>
<organism>
    <name type="scientific">Gallus gallus</name>
    <name type="common">Chicken</name>
    <dbReference type="NCBI Taxonomy" id="9031"/>
    <lineage>
        <taxon>Eukaryota</taxon>
        <taxon>Metazoa</taxon>
        <taxon>Chordata</taxon>
        <taxon>Craniata</taxon>
        <taxon>Vertebrata</taxon>
        <taxon>Euteleostomi</taxon>
        <taxon>Archelosauria</taxon>
        <taxon>Archosauria</taxon>
        <taxon>Dinosauria</taxon>
        <taxon>Saurischia</taxon>
        <taxon>Theropoda</taxon>
        <taxon>Coelurosauria</taxon>
        <taxon>Aves</taxon>
        <taxon>Neognathae</taxon>
        <taxon>Galloanserae</taxon>
        <taxon>Galliformes</taxon>
        <taxon>Phasianidae</taxon>
        <taxon>Phasianinae</taxon>
        <taxon>Gallus</taxon>
    </lineage>
</organism>
<name>CER1_CHICK</name>
<evidence type="ECO:0000255" key="1"/>
<evidence type="ECO:0000255" key="2">
    <source>
        <dbReference type="PROSITE-ProRule" id="PRU00039"/>
    </source>
</evidence>
<evidence type="ECO:0000269" key="3">
    <source>
    </source>
</evidence>
<evidence type="ECO:0000305" key="4"/>
<protein>
    <recommendedName>
        <fullName>Cerberus</fullName>
    </recommendedName>
</protein>
<proteinExistence type="evidence at transcript level"/>
<comment type="function">
    <text evidence="3">Cytokine that acts as a regulator of the activity of Nodal/BMP pathways during the establishment of bilateral asymmetry in the head and trunk of the embryo.</text>
</comment>
<comment type="subcellular location">
    <subcellularLocation>
        <location evidence="4">Secreted</location>
    </subcellularLocation>
</comment>
<comment type="developmental stage">
    <text evidence="3">At embryonic stage 8 is expressed in the left lateral plate mesoderm, bilaterally in the head and in a small horizontal domain coincident with the second caudal somite. By stage 9, expression in the right side of the head has disappeared and all remaining expression in both the head and trunk is on the left. The most medial domain of expression expands caudally as new somites form.</text>
</comment>
<comment type="induction">
    <text evidence="3">By SHH signaling both in the head and in the trunk. On the left side in the head was also controlled by NODAL.</text>
</comment>
<comment type="similarity">
    <text evidence="4">Belongs to the DAN family.</text>
</comment>
<sequence length="272" mass="31225">MSLLLLQLLVLSCLGDTEPQPDSQQRKRRPLQHLFYLDRNLLESQSFHELVGENPVGVKETQEEPSFFIAFPQTAGESQKQGEKKMSRFILPNAELYAHQDLRTWAAPKEISPVENFSPSYYSNKRDVEPPYRKDAKKFWDHFMLRKNSASEEVVLPIKTNEMHQETCRTLPFSQSVAHESCEKVIVQNNLCFGKCSSFHVPGPDDRLYTFCSKCLPTKFSMKHLDLNCTSSVPVVKKVMIVEECNCETQKIEDPLLGSRQSDFLGNLPEHN</sequence>
<gene>
    <name type="primary">CER1</name>
</gene>